<name>RPOA_PORPU</name>
<geneLocation type="chloroplast"/>
<comment type="function">
    <text evidence="1">DNA-dependent RNA polymerase catalyzes the transcription of DNA into RNA using the four ribonucleoside triphosphates as substrates.</text>
</comment>
<comment type="catalytic activity">
    <reaction evidence="1">
        <text>RNA(n) + a ribonucleoside 5'-triphosphate = RNA(n+1) + diphosphate</text>
        <dbReference type="Rhea" id="RHEA:21248"/>
        <dbReference type="Rhea" id="RHEA-COMP:14527"/>
        <dbReference type="Rhea" id="RHEA-COMP:17342"/>
        <dbReference type="ChEBI" id="CHEBI:33019"/>
        <dbReference type="ChEBI" id="CHEBI:61557"/>
        <dbReference type="ChEBI" id="CHEBI:140395"/>
        <dbReference type="EC" id="2.7.7.6"/>
    </reaction>
</comment>
<comment type="subunit">
    <text evidence="1">In plastids the minimal PEP RNA polymerase catalytic core is composed of four subunits: alpha, beta, beta', and beta''. When a (nuclear-encoded) sigma factor is associated with the core the holoenzyme is formed, which can initiate transcription.</text>
</comment>
<comment type="subcellular location">
    <subcellularLocation>
        <location>Plastid</location>
        <location>Chloroplast</location>
    </subcellularLocation>
</comment>
<comment type="domain">
    <text evidence="1">The N-terminal domain is essential for RNAP assembly and basal transcription, whereas the C-terminal domain is involved in interaction with transcriptional regulators and with upstream promoter elements.</text>
</comment>
<comment type="similarity">
    <text evidence="1">Belongs to the RNA polymerase alpha chain family.</text>
</comment>
<gene>
    <name evidence="1" type="primary">rpoA</name>
</gene>
<reference key="1">
    <citation type="journal article" date="1995" name="Plant Mol. Biol. Rep.">
        <title>Complete nucleotide sequence of the Porphyra purpurea chloroplast genome.</title>
        <authorList>
            <person name="Reith M.E."/>
            <person name="Munholland J."/>
        </authorList>
    </citation>
    <scope>NUCLEOTIDE SEQUENCE [LARGE SCALE GENOMIC DNA]</scope>
    <source>
        <strain>Avonport</strain>
    </source>
</reference>
<organism>
    <name type="scientific">Porphyra purpurea</name>
    <name type="common">Red seaweed</name>
    <name type="synonym">Ulva purpurea</name>
    <dbReference type="NCBI Taxonomy" id="2787"/>
    <lineage>
        <taxon>Eukaryota</taxon>
        <taxon>Rhodophyta</taxon>
        <taxon>Bangiophyceae</taxon>
        <taxon>Bangiales</taxon>
        <taxon>Bangiaceae</taxon>
        <taxon>Porphyra</taxon>
    </lineage>
</organism>
<protein>
    <recommendedName>
        <fullName evidence="1">DNA-directed RNA polymerase subunit alpha</fullName>
        <shortName evidence="1">PEP</shortName>
        <ecNumber evidence="1">2.7.7.6</ecNumber>
    </recommendedName>
    <alternativeName>
        <fullName evidence="1">Plastid-encoded RNA polymerase subunit alpha</fullName>
        <shortName evidence="1">RNA polymerase subunit alpha</shortName>
    </alternativeName>
</protein>
<sequence>MAQFQIECVESRTDGARGQYGSFVIEALNQGQGITLGNALRRSILSDLEGTAIVAVRIAGVNHEFSTIPGVREDVLEILLNLKEVVFKSNNQESQIGRIKVQGPAIVTAGLFELSSDIEVVDPRQYIATICNNTIFEMEFKIEKSCGYRLAEKAVDELSLDFLQVDSVFMPVNKVNYKVEEVRVGTNSIKDRLILQIWTNGSISPQEAISQGATVLTNLFCSLRNLDFKSVDTYRNKEDKKISQVLIEELQLSVRAYNCLKRAQIHSIADLLDYSQEELLEIKNFGQKSAEEVIYALQKTLGISLPKEKTD</sequence>
<proteinExistence type="inferred from homology"/>
<dbReference type="EC" id="2.7.7.6" evidence="1"/>
<dbReference type="EMBL" id="U38804">
    <property type="protein sequence ID" value="AAC08179.1"/>
    <property type="molecule type" value="Genomic_DNA"/>
</dbReference>
<dbReference type="PIR" id="S73214">
    <property type="entry name" value="S73214"/>
</dbReference>
<dbReference type="RefSeq" id="NP_053903.1">
    <property type="nucleotide sequence ID" value="NC_000925.1"/>
</dbReference>
<dbReference type="SMR" id="P51293"/>
<dbReference type="GeneID" id="809922"/>
<dbReference type="GO" id="GO:0009507">
    <property type="term" value="C:chloroplast"/>
    <property type="evidence" value="ECO:0007669"/>
    <property type="project" value="UniProtKB-SubCell"/>
</dbReference>
<dbReference type="GO" id="GO:0000428">
    <property type="term" value="C:DNA-directed RNA polymerase complex"/>
    <property type="evidence" value="ECO:0007669"/>
    <property type="project" value="UniProtKB-KW"/>
</dbReference>
<dbReference type="GO" id="GO:0005739">
    <property type="term" value="C:mitochondrion"/>
    <property type="evidence" value="ECO:0007669"/>
    <property type="project" value="GOC"/>
</dbReference>
<dbReference type="GO" id="GO:0003677">
    <property type="term" value="F:DNA binding"/>
    <property type="evidence" value="ECO:0007669"/>
    <property type="project" value="UniProtKB-UniRule"/>
</dbReference>
<dbReference type="GO" id="GO:0003899">
    <property type="term" value="F:DNA-directed RNA polymerase activity"/>
    <property type="evidence" value="ECO:0007669"/>
    <property type="project" value="UniProtKB-UniRule"/>
</dbReference>
<dbReference type="GO" id="GO:0046983">
    <property type="term" value="F:protein dimerization activity"/>
    <property type="evidence" value="ECO:0007669"/>
    <property type="project" value="InterPro"/>
</dbReference>
<dbReference type="GO" id="GO:0006351">
    <property type="term" value="P:DNA-templated transcription"/>
    <property type="evidence" value="ECO:0007669"/>
    <property type="project" value="UniProtKB-UniRule"/>
</dbReference>
<dbReference type="CDD" id="cd06928">
    <property type="entry name" value="RNAP_alpha_NTD"/>
    <property type="match status" value="1"/>
</dbReference>
<dbReference type="FunFam" id="2.170.120.12:FF:000001">
    <property type="entry name" value="DNA-directed RNA polymerase subunit alpha"/>
    <property type="match status" value="1"/>
</dbReference>
<dbReference type="Gene3D" id="1.10.150.20">
    <property type="entry name" value="5' to 3' exonuclease, C-terminal subdomain"/>
    <property type="match status" value="1"/>
</dbReference>
<dbReference type="Gene3D" id="2.170.120.12">
    <property type="entry name" value="DNA-directed RNA polymerase, insert domain"/>
    <property type="match status" value="1"/>
</dbReference>
<dbReference type="Gene3D" id="3.30.1360.10">
    <property type="entry name" value="RNA polymerase, RBP11-like subunit"/>
    <property type="match status" value="1"/>
</dbReference>
<dbReference type="HAMAP" id="MF_00059">
    <property type="entry name" value="RNApol_bact_RpoA"/>
    <property type="match status" value="1"/>
</dbReference>
<dbReference type="InterPro" id="IPR011262">
    <property type="entry name" value="DNA-dir_RNA_pol_insert"/>
</dbReference>
<dbReference type="InterPro" id="IPR011263">
    <property type="entry name" value="DNA-dir_RNA_pol_RpoA/D/Rpb3"/>
</dbReference>
<dbReference type="InterPro" id="IPR011773">
    <property type="entry name" value="DNA-dir_RpoA"/>
</dbReference>
<dbReference type="InterPro" id="IPR036603">
    <property type="entry name" value="RBP11-like"/>
</dbReference>
<dbReference type="InterPro" id="IPR011260">
    <property type="entry name" value="RNAP_asu_C"/>
</dbReference>
<dbReference type="InterPro" id="IPR036643">
    <property type="entry name" value="RNApol_insert_sf"/>
</dbReference>
<dbReference type="NCBIfam" id="NF003516">
    <property type="entry name" value="PRK05182.2-2"/>
    <property type="match status" value="1"/>
</dbReference>
<dbReference type="NCBIfam" id="NF003519">
    <property type="entry name" value="PRK05182.2-5"/>
    <property type="match status" value="1"/>
</dbReference>
<dbReference type="NCBIfam" id="TIGR02027">
    <property type="entry name" value="rpoA"/>
    <property type="match status" value="1"/>
</dbReference>
<dbReference type="Pfam" id="PF01000">
    <property type="entry name" value="RNA_pol_A_bac"/>
    <property type="match status" value="1"/>
</dbReference>
<dbReference type="Pfam" id="PF03118">
    <property type="entry name" value="RNA_pol_A_CTD"/>
    <property type="match status" value="1"/>
</dbReference>
<dbReference type="Pfam" id="PF01193">
    <property type="entry name" value="RNA_pol_L"/>
    <property type="match status" value="1"/>
</dbReference>
<dbReference type="SMART" id="SM00662">
    <property type="entry name" value="RPOLD"/>
    <property type="match status" value="1"/>
</dbReference>
<dbReference type="SUPFAM" id="SSF47789">
    <property type="entry name" value="C-terminal domain of RNA polymerase alpha subunit"/>
    <property type="match status" value="1"/>
</dbReference>
<dbReference type="SUPFAM" id="SSF56553">
    <property type="entry name" value="Insert subdomain of RNA polymerase alpha subunit"/>
    <property type="match status" value="1"/>
</dbReference>
<dbReference type="SUPFAM" id="SSF55257">
    <property type="entry name" value="RBP11-like subunits of RNA polymerase"/>
    <property type="match status" value="1"/>
</dbReference>
<keyword id="KW-0150">Chloroplast</keyword>
<keyword id="KW-0240">DNA-directed RNA polymerase</keyword>
<keyword id="KW-0548">Nucleotidyltransferase</keyword>
<keyword id="KW-0934">Plastid</keyword>
<keyword id="KW-0804">Transcription</keyword>
<keyword id="KW-0808">Transferase</keyword>
<accession>P51293</accession>
<feature type="chain" id="PRO_0000175483" description="DNA-directed RNA polymerase subunit alpha">
    <location>
        <begin position="1"/>
        <end position="311"/>
    </location>
</feature>
<feature type="region of interest" description="Alpha N-terminal domain (alpha-NTD)" evidence="1">
    <location>
        <begin position="1"/>
        <end position="227"/>
    </location>
</feature>
<feature type="region of interest" description="Alpha C-terminal domain (alpha-CTD)" evidence="1">
    <location>
        <begin position="242"/>
        <end position="311"/>
    </location>
</feature>
<evidence type="ECO:0000255" key="1">
    <source>
        <dbReference type="HAMAP-Rule" id="MF_00059"/>
    </source>
</evidence>